<keyword id="KW-0067">ATP-binding</keyword>
<keyword id="KW-0963">Cytoplasm</keyword>
<keyword id="KW-0460">Magnesium</keyword>
<keyword id="KW-0479">Metal-binding</keyword>
<keyword id="KW-0547">Nucleotide-binding</keyword>
<keyword id="KW-0554">One-carbon metabolism</keyword>
<keyword id="KW-0630">Potassium</keyword>
<keyword id="KW-1185">Reference proteome</keyword>
<keyword id="KW-0808">Transferase</keyword>
<dbReference type="EC" id="2.5.1.6" evidence="1"/>
<dbReference type="EMBL" id="AE000511">
    <property type="protein sequence ID" value="AAD07267.1"/>
    <property type="molecule type" value="Genomic_DNA"/>
</dbReference>
<dbReference type="PIR" id="E64544">
    <property type="entry name" value="E64544"/>
</dbReference>
<dbReference type="RefSeq" id="NP_206996.1">
    <property type="nucleotide sequence ID" value="NC_000915.1"/>
</dbReference>
<dbReference type="RefSeq" id="WP_000655178.1">
    <property type="nucleotide sequence ID" value="NC_018939.1"/>
</dbReference>
<dbReference type="SMR" id="P56460"/>
<dbReference type="DIP" id="DIP-3226N"/>
<dbReference type="FunCoup" id="P56460">
    <property type="interactions" value="382"/>
</dbReference>
<dbReference type="IntAct" id="P56460">
    <property type="interactions" value="6"/>
</dbReference>
<dbReference type="MINT" id="P56460"/>
<dbReference type="STRING" id="85962.HP_0197"/>
<dbReference type="PaxDb" id="85962-C694_00980"/>
<dbReference type="EnsemblBacteria" id="AAD07267">
    <property type="protein sequence ID" value="AAD07267"/>
    <property type="gene ID" value="HP_0197"/>
</dbReference>
<dbReference type="KEGG" id="heo:C694_00980"/>
<dbReference type="KEGG" id="hpy:HP_0197"/>
<dbReference type="PATRIC" id="fig|85962.47.peg.212"/>
<dbReference type="eggNOG" id="COG0192">
    <property type="taxonomic scope" value="Bacteria"/>
</dbReference>
<dbReference type="InParanoid" id="P56460"/>
<dbReference type="OrthoDB" id="9801686at2"/>
<dbReference type="PhylomeDB" id="P56460"/>
<dbReference type="BioCyc" id="MetaCyc:HP0197-MONOMER"/>
<dbReference type="UniPathway" id="UPA00315">
    <property type="reaction ID" value="UER00080"/>
</dbReference>
<dbReference type="Proteomes" id="UP000000429">
    <property type="component" value="Chromosome"/>
</dbReference>
<dbReference type="GO" id="GO:0005829">
    <property type="term" value="C:cytosol"/>
    <property type="evidence" value="ECO:0000318"/>
    <property type="project" value="GO_Central"/>
</dbReference>
<dbReference type="GO" id="GO:0005524">
    <property type="term" value="F:ATP binding"/>
    <property type="evidence" value="ECO:0007669"/>
    <property type="project" value="UniProtKB-UniRule"/>
</dbReference>
<dbReference type="GO" id="GO:0000287">
    <property type="term" value="F:magnesium ion binding"/>
    <property type="evidence" value="ECO:0007669"/>
    <property type="project" value="UniProtKB-UniRule"/>
</dbReference>
<dbReference type="GO" id="GO:0004478">
    <property type="term" value="F:methionine adenosyltransferase activity"/>
    <property type="evidence" value="ECO:0000318"/>
    <property type="project" value="GO_Central"/>
</dbReference>
<dbReference type="GO" id="GO:0006730">
    <property type="term" value="P:one-carbon metabolic process"/>
    <property type="evidence" value="ECO:0007669"/>
    <property type="project" value="UniProtKB-KW"/>
</dbReference>
<dbReference type="GO" id="GO:0006556">
    <property type="term" value="P:S-adenosylmethionine biosynthetic process"/>
    <property type="evidence" value="ECO:0000318"/>
    <property type="project" value="GO_Central"/>
</dbReference>
<dbReference type="CDD" id="cd18079">
    <property type="entry name" value="S-AdoMet_synt"/>
    <property type="match status" value="1"/>
</dbReference>
<dbReference type="FunFam" id="3.30.300.10:FF:000003">
    <property type="entry name" value="S-adenosylmethionine synthase"/>
    <property type="match status" value="1"/>
</dbReference>
<dbReference type="Gene3D" id="3.30.300.10">
    <property type="match status" value="3"/>
</dbReference>
<dbReference type="HAMAP" id="MF_00086">
    <property type="entry name" value="S_AdoMet_synth1"/>
    <property type="match status" value="1"/>
</dbReference>
<dbReference type="InterPro" id="IPR022631">
    <property type="entry name" value="ADOMET_SYNTHASE_CS"/>
</dbReference>
<dbReference type="InterPro" id="IPR022630">
    <property type="entry name" value="S-AdoMet_synt_C"/>
</dbReference>
<dbReference type="InterPro" id="IPR022629">
    <property type="entry name" value="S-AdoMet_synt_central"/>
</dbReference>
<dbReference type="InterPro" id="IPR022628">
    <property type="entry name" value="S-AdoMet_synt_N"/>
</dbReference>
<dbReference type="InterPro" id="IPR002133">
    <property type="entry name" value="S-AdoMet_synthetase"/>
</dbReference>
<dbReference type="InterPro" id="IPR022636">
    <property type="entry name" value="S-AdoMet_synthetase_sfam"/>
</dbReference>
<dbReference type="NCBIfam" id="TIGR01034">
    <property type="entry name" value="metK"/>
    <property type="match status" value="1"/>
</dbReference>
<dbReference type="PANTHER" id="PTHR11964">
    <property type="entry name" value="S-ADENOSYLMETHIONINE SYNTHETASE"/>
    <property type="match status" value="1"/>
</dbReference>
<dbReference type="Pfam" id="PF02773">
    <property type="entry name" value="S-AdoMet_synt_C"/>
    <property type="match status" value="1"/>
</dbReference>
<dbReference type="Pfam" id="PF02772">
    <property type="entry name" value="S-AdoMet_synt_M"/>
    <property type="match status" value="1"/>
</dbReference>
<dbReference type="Pfam" id="PF00438">
    <property type="entry name" value="S-AdoMet_synt_N"/>
    <property type="match status" value="1"/>
</dbReference>
<dbReference type="PIRSF" id="PIRSF000497">
    <property type="entry name" value="MAT"/>
    <property type="match status" value="1"/>
</dbReference>
<dbReference type="SUPFAM" id="SSF55973">
    <property type="entry name" value="S-adenosylmethionine synthetase"/>
    <property type="match status" value="3"/>
</dbReference>
<dbReference type="PROSITE" id="PS00376">
    <property type="entry name" value="ADOMET_SYNTHASE_1"/>
    <property type="match status" value="1"/>
</dbReference>
<dbReference type="PROSITE" id="PS00377">
    <property type="entry name" value="ADOMET_SYNTHASE_2"/>
    <property type="match status" value="1"/>
</dbReference>
<sequence>MKDSFLFTSESVTEGHPDKMADQISDAVLDYIIERDQKAKVACETLVSNGFCMITGELKTSVYAPMQEIAREVVKKIGYTDALYGFDYRSAAVLNGVGEQSPDINQGVDREDGEIGAGDQGLMFGYACKETETLMPLPIHLAHQLTFALAQKRKDNTLPFLRPDGKSQVSVRYENNKPVSIDTIVISTQHSPEVSQKHLKEAVIEEIVYKVLSKEYLHDNIKFFVNPTGKFVIGGPQGDAGLTGRKIIVDTYGGSCPHGGGAFSGKDPSKVDRSAAYAARYVAKNLVASGVCDKATVQLAYAIGVIEPVSIYVNTHNTSKYSSAELEKCVKSVFKLTPKGIIESLDLLRPIYSLTSAYGHFGRELEEFTWEKTNKAEEIKAFFKR</sequence>
<protein>
    <recommendedName>
        <fullName evidence="1">S-adenosylmethionine synthase</fullName>
        <shortName evidence="1">AdoMet synthase</shortName>
        <ecNumber evidence="1">2.5.1.6</ecNumber>
    </recommendedName>
    <alternativeName>
        <fullName evidence="1">MAT</fullName>
    </alternativeName>
    <alternativeName>
        <fullName evidence="1">Methionine adenosyltransferase</fullName>
    </alternativeName>
</protein>
<comment type="function">
    <text evidence="1">Catalyzes the formation of S-adenosylmethionine (AdoMet) from methionine and ATP. The overall synthetic reaction is composed of two sequential steps, AdoMet formation and the subsequent tripolyphosphate hydrolysis which occurs prior to release of AdoMet from the enzyme.</text>
</comment>
<comment type="catalytic activity">
    <reaction evidence="1">
        <text>L-methionine + ATP + H2O = S-adenosyl-L-methionine + phosphate + diphosphate</text>
        <dbReference type="Rhea" id="RHEA:21080"/>
        <dbReference type="ChEBI" id="CHEBI:15377"/>
        <dbReference type="ChEBI" id="CHEBI:30616"/>
        <dbReference type="ChEBI" id="CHEBI:33019"/>
        <dbReference type="ChEBI" id="CHEBI:43474"/>
        <dbReference type="ChEBI" id="CHEBI:57844"/>
        <dbReference type="ChEBI" id="CHEBI:59789"/>
        <dbReference type="EC" id="2.5.1.6"/>
    </reaction>
</comment>
<comment type="cofactor">
    <cofactor evidence="1">
        <name>Mg(2+)</name>
        <dbReference type="ChEBI" id="CHEBI:18420"/>
    </cofactor>
    <text evidence="1">Binds 2 divalent ions per subunit.</text>
</comment>
<comment type="cofactor">
    <cofactor evidence="1">
        <name>K(+)</name>
        <dbReference type="ChEBI" id="CHEBI:29103"/>
    </cofactor>
    <text evidence="1">Binds 1 potassium ion per subunit.</text>
</comment>
<comment type="pathway">
    <text evidence="1">Amino-acid biosynthesis; S-adenosyl-L-methionine biosynthesis; S-adenosyl-L-methionine from L-methionine: step 1/1.</text>
</comment>
<comment type="subunit">
    <text evidence="1">Homotetramer; dimer of dimers.</text>
</comment>
<comment type="subcellular location">
    <subcellularLocation>
        <location evidence="1">Cytoplasm</location>
    </subcellularLocation>
</comment>
<comment type="similarity">
    <text evidence="1">Belongs to the AdoMet synthase family.</text>
</comment>
<accession>P56460</accession>
<gene>
    <name evidence="1" type="primary">metK</name>
    <name type="ordered locus">HP_0197</name>
</gene>
<feature type="chain" id="PRO_0000174531" description="S-adenosylmethionine synthase">
    <location>
        <begin position="1"/>
        <end position="385"/>
    </location>
</feature>
<feature type="region of interest" description="Flexible loop" evidence="1">
    <location>
        <begin position="100"/>
        <end position="110"/>
    </location>
</feature>
<feature type="binding site" description="in other chain" evidence="1">
    <location>
        <position position="16"/>
    </location>
    <ligand>
        <name>ATP</name>
        <dbReference type="ChEBI" id="CHEBI:30616"/>
        <note>ligand shared between two neighboring subunits</note>
    </ligand>
</feature>
<feature type="binding site" evidence="1">
    <location>
        <position position="18"/>
    </location>
    <ligand>
        <name>Mg(2+)</name>
        <dbReference type="ChEBI" id="CHEBI:18420"/>
    </ligand>
</feature>
<feature type="binding site" evidence="1">
    <location>
        <position position="44"/>
    </location>
    <ligand>
        <name>K(+)</name>
        <dbReference type="ChEBI" id="CHEBI:29103"/>
    </ligand>
</feature>
<feature type="binding site" description="in other chain" evidence="1">
    <location>
        <position position="57"/>
    </location>
    <ligand>
        <name>L-methionine</name>
        <dbReference type="ChEBI" id="CHEBI:57844"/>
        <note>ligand shared between two neighboring subunits</note>
    </ligand>
</feature>
<feature type="binding site" description="in other chain" evidence="1">
    <location>
        <position position="100"/>
    </location>
    <ligand>
        <name>L-methionine</name>
        <dbReference type="ChEBI" id="CHEBI:57844"/>
        <note>ligand shared between two neighboring subunits</note>
    </ligand>
</feature>
<feature type="binding site" description="in other chain" evidence="1">
    <location>
        <begin position="164"/>
        <end position="166"/>
    </location>
    <ligand>
        <name>ATP</name>
        <dbReference type="ChEBI" id="CHEBI:30616"/>
        <note>ligand shared between two neighboring subunits</note>
    </ligand>
</feature>
<feature type="binding site" description="in other chain" evidence="1">
    <location>
        <begin position="230"/>
        <end position="231"/>
    </location>
    <ligand>
        <name>ATP</name>
        <dbReference type="ChEBI" id="CHEBI:30616"/>
        <note>ligand shared between two neighboring subunits</note>
    </ligand>
</feature>
<feature type="binding site" evidence="1">
    <location>
        <position position="239"/>
    </location>
    <ligand>
        <name>ATP</name>
        <dbReference type="ChEBI" id="CHEBI:30616"/>
        <note>ligand shared between two neighboring subunits</note>
    </ligand>
</feature>
<feature type="binding site" evidence="1">
    <location>
        <position position="239"/>
    </location>
    <ligand>
        <name>L-methionine</name>
        <dbReference type="ChEBI" id="CHEBI:57844"/>
        <note>ligand shared between two neighboring subunits</note>
    </ligand>
</feature>
<feature type="binding site" description="in other chain" evidence="1">
    <location>
        <begin position="245"/>
        <end position="246"/>
    </location>
    <ligand>
        <name>ATP</name>
        <dbReference type="ChEBI" id="CHEBI:30616"/>
        <note>ligand shared between two neighboring subunits</note>
    </ligand>
</feature>
<feature type="binding site" evidence="1">
    <location>
        <position position="262"/>
    </location>
    <ligand>
        <name>ATP</name>
        <dbReference type="ChEBI" id="CHEBI:30616"/>
        <note>ligand shared between two neighboring subunits</note>
    </ligand>
</feature>
<feature type="binding site" evidence="1">
    <location>
        <position position="266"/>
    </location>
    <ligand>
        <name>ATP</name>
        <dbReference type="ChEBI" id="CHEBI:30616"/>
        <note>ligand shared between two neighboring subunits</note>
    </ligand>
</feature>
<feature type="binding site" description="in other chain" evidence="1">
    <location>
        <position position="270"/>
    </location>
    <ligand>
        <name>L-methionine</name>
        <dbReference type="ChEBI" id="CHEBI:57844"/>
        <note>ligand shared between two neighboring subunits</note>
    </ligand>
</feature>
<reference key="1">
    <citation type="journal article" date="1997" name="Nature">
        <title>The complete genome sequence of the gastric pathogen Helicobacter pylori.</title>
        <authorList>
            <person name="Tomb J.-F."/>
            <person name="White O."/>
            <person name="Kerlavage A.R."/>
            <person name="Clayton R.A."/>
            <person name="Sutton G.G."/>
            <person name="Fleischmann R.D."/>
            <person name="Ketchum K.A."/>
            <person name="Klenk H.-P."/>
            <person name="Gill S.R."/>
            <person name="Dougherty B.A."/>
            <person name="Nelson K.E."/>
            <person name="Quackenbush J."/>
            <person name="Zhou L."/>
            <person name="Kirkness E.F."/>
            <person name="Peterson S.N."/>
            <person name="Loftus B.J."/>
            <person name="Richardson D.L."/>
            <person name="Dodson R.J."/>
            <person name="Khalak H.G."/>
            <person name="Glodek A."/>
            <person name="McKenney K."/>
            <person name="FitzGerald L.M."/>
            <person name="Lee N."/>
            <person name="Adams M.D."/>
            <person name="Hickey E.K."/>
            <person name="Berg D.E."/>
            <person name="Gocayne J.D."/>
            <person name="Utterback T.R."/>
            <person name="Peterson J.D."/>
            <person name="Kelley J.M."/>
            <person name="Cotton M.D."/>
            <person name="Weidman J.F."/>
            <person name="Fujii C."/>
            <person name="Bowman C."/>
            <person name="Watthey L."/>
            <person name="Wallin E."/>
            <person name="Hayes W.S."/>
            <person name="Borodovsky M."/>
            <person name="Karp P.D."/>
            <person name="Smith H.O."/>
            <person name="Fraser C.M."/>
            <person name="Venter J.C."/>
        </authorList>
    </citation>
    <scope>NUCLEOTIDE SEQUENCE [LARGE SCALE GENOMIC DNA]</scope>
    <source>
        <strain>ATCC 700392 / 26695</strain>
    </source>
</reference>
<name>METK_HELPY</name>
<evidence type="ECO:0000255" key="1">
    <source>
        <dbReference type="HAMAP-Rule" id="MF_00086"/>
    </source>
</evidence>
<organism>
    <name type="scientific">Helicobacter pylori (strain ATCC 700392 / 26695)</name>
    <name type="common">Campylobacter pylori</name>
    <dbReference type="NCBI Taxonomy" id="85962"/>
    <lineage>
        <taxon>Bacteria</taxon>
        <taxon>Pseudomonadati</taxon>
        <taxon>Campylobacterota</taxon>
        <taxon>Epsilonproteobacteria</taxon>
        <taxon>Campylobacterales</taxon>
        <taxon>Helicobacteraceae</taxon>
        <taxon>Helicobacter</taxon>
    </lineage>
</organism>
<proteinExistence type="inferred from homology"/>